<name>AROC_THEVB</name>
<reference key="1">
    <citation type="journal article" date="2002" name="DNA Res.">
        <title>Complete genome structure of the thermophilic cyanobacterium Thermosynechococcus elongatus BP-1.</title>
        <authorList>
            <person name="Nakamura Y."/>
            <person name="Kaneko T."/>
            <person name="Sato S."/>
            <person name="Ikeuchi M."/>
            <person name="Katoh H."/>
            <person name="Sasamoto S."/>
            <person name="Watanabe A."/>
            <person name="Iriguchi M."/>
            <person name="Kawashima K."/>
            <person name="Kimura T."/>
            <person name="Kishida Y."/>
            <person name="Kiyokawa C."/>
            <person name="Kohara M."/>
            <person name="Matsumoto M."/>
            <person name="Matsuno A."/>
            <person name="Nakazaki N."/>
            <person name="Shimpo S."/>
            <person name="Sugimoto M."/>
            <person name="Takeuchi C."/>
            <person name="Yamada M."/>
            <person name="Tabata S."/>
        </authorList>
    </citation>
    <scope>NUCLEOTIDE SEQUENCE [LARGE SCALE GENOMIC DNA]</scope>
    <source>
        <strain>NIES-2133 / IAM M-273 / BP-1</strain>
    </source>
</reference>
<comment type="function">
    <text evidence="1">Catalyzes the anti-1,4-elimination of the C-3 phosphate and the C-6 proR hydrogen from 5-enolpyruvylshikimate-3-phosphate (EPSP) to yield chorismate, which is the branch point compound that serves as the starting substrate for the three terminal pathways of aromatic amino acid biosynthesis. This reaction introduces a second double bond into the aromatic ring system.</text>
</comment>
<comment type="catalytic activity">
    <reaction evidence="1">
        <text>5-O-(1-carboxyvinyl)-3-phosphoshikimate = chorismate + phosphate</text>
        <dbReference type="Rhea" id="RHEA:21020"/>
        <dbReference type="ChEBI" id="CHEBI:29748"/>
        <dbReference type="ChEBI" id="CHEBI:43474"/>
        <dbReference type="ChEBI" id="CHEBI:57701"/>
        <dbReference type="EC" id="4.2.3.5"/>
    </reaction>
</comment>
<comment type="cofactor">
    <cofactor evidence="1">
        <name>FMNH2</name>
        <dbReference type="ChEBI" id="CHEBI:57618"/>
    </cofactor>
    <text evidence="1">Reduced FMN (FMNH(2)).</text>
</comment>
<comment type="pathway">
    <text evidence="1">Metabolic intermediate biosynthesis; chorismate biosynthesis; chorismate from D-erythrose 4-phosphate and phosphoenolpyruvate: step 7/7.</text>
</comment>
<comment type="subunit">
    <text evidence="1">Homotetramer.</text>
</comment>
<comment type="similarity">
    <text evidence="1">Belongs to the chorismate synthase family.</text>
</comment>
<sequence length="363" mass="39009">MGNTFGHLFRVTTFGESHGGGVGVVVDGCPPRLELSEVDIQKELDRRRPGQSRLTTPRQESDRCEILSGVFEGKTLGTPIAILVRNKDTRPEDYAEMAQVYRPSHADATYDAKYGIRNWQGGGRSSARETIGRVAAGAIARKILTQVAGTEIIAYVKRVKDIEAVVDPDTVAAAAVEANIMRCPDAATAEKMIALVDEVRRQANSIGGVIECVVRNVPVGLGSPVFDKLEADLAKGVMSLPASKGFEIGSGFAGTLLTGQEHNDEFYTDAQGRIRTRTNRSGGVQGGISNGENIILRVAFKPTATIGQAQKTVNRAGEETILAAKGRHDPCVLPRAVPMVEAMVALVLCDHLLRDHAQCHLNF</sequence>
<evidence type="ECO:0000255" key="1">
    <source>
        <dbReference type="HAMAP-Rule" id="MF_00300"/>
    </source>
</evidence>
<proteinExistence type="inferred from homology"/>
<keyword id="KW-0028">Amino-acid biosynthesis</keyword>
<keyword id="KW-0057">Aromatic amino acid biosynthesis</keyword>
<keyword id="KW-0274">FAD</keyword>
<keyword id="KW-0285">Flavoprotein</keyword>
<keyword id="KW-0288">FMN</keyword>
<keyword id="KW-0456">Lyase</keyword>
<keyword id="KW-0521">NADP</keyword>
<keyword id="KW-1185">Reference proteome</keyword>
<dbReference type="EC" id="4.2.3.5" evidence="1"/>
<dbReference type="EMBL" id="BA000039">
    <property type="protein sequence ID" value="BAC08015.1"/>
    <property type="molecule type" value="Genomic_DNA"/>
</dbReference>
<dbReference type="RefSeq" id="NP_681253.1">
    <property type="nucleotide sequence ID" value="NC_004113.1"/>
</dbReference>
<dbReference type="RefSeq" id="WP_011056316.1">
    <property type="nucleotide sequence ID" value="NC_004113.1"/>
</dbReference>
<dbReference type="SMR" id="Q8DLM1"/>
<dbReference type="STRING" id="197221.gene:10747052"/>
<dbReference type="EnsemblBacteria" id="BAC08015">
    <property type="protein sequence ID" value="BAC08015"/>
    <property type="gene ID" value="BAC08015"/>
</dbReference>
<dbReference type="KEGG" id="tel:tll0463"/>
<dbReference type="PATRIC" id="fig|197221.4.peg.488"/>
<dbReference type="eggNOG" id="COG0082">
    <property type="taxonomic scope" value="Bacteria"/>
</dbReference>
<dbReference type="UniPathway" id="UPA00053">
    <property type="reaction ID" value="UER00090"/>
</dbReference>
<dbReference type="Proteomes" id="UP000000440">
    <property type="component" value="Chromosome"/>
</dbReference>
<dbReference type="GO" id="GO:0005829">
    <property type="term" value="C:cytosol"/>
    <property type="evidence" value="ECO:0007669"/>
    <property type="project" value="TreeGrafter"/>
</dbReference>
<dbReference type="GO" id="GO:0004107">
    <property type="term" value="F:chorismate synthase activity"/>
    <property type="evidence" value="ECO:0007669"/>
    <property type="project" value="UniProtKB-UniRule"/>
</dbReference>
<dbReference type="GO" id="GO:0010181">
    <property type="term" value="F:FMN binding"/>
    <property type="evidence" value="ECO:0007669"/>
    <property type="project" value="TreeGrafter"/>
</dbReference>
<dbReference type="GO" id="GO:0008652">
    <property type="term" value="P:amino acid biosynthetic process"/>
    <property type="evidence" value="ECO:0007669"/>
    <property type="project" value="UniProtKB-KW"/>
</dbReference>
<dbReference type="GO" id="GO:0009073">
    <property type="term" value="P:aromatic amino acid family biosynthetic process"/>
    <property type="evidence" value="ECO:0007669"/>
    <property type="project" value="UniProtKB-KW"/>
</dbReference>
<dbReference type="GO" id="GO:0009423">
    <property type="term" value="P:chorismate biosynthetic process"/>
    <property type="evidence" value="ECO:0007669"/>
    <property type="project" value="UniProtKB-UniRule"/>
</dbReference>
<dbReference type="CDD" id="cd07304">
    <property type="entry name" value="Chorismate_synthase"/>
    <property type="match status" value="1"/>
</dbReference>
<dbReference type="FunFam" id="3.60.150.10:FF:000003">
    <property type="entry name" value="Chorismate synthase"/>
    <property type="match status" value="1"/>
</dbReference>
<dbReference type="Gene3D" id="3.60.150.10">
    <property type="entry name" value="Chorismate synthase AroC"/>
    <property type="match status" value="1"/>
</dbReference>
<dbReference type="HAMAP" id="MF_00300">
    <property type="entry name" value="Chorismate_synth"/>
    <property type="match status" value="1"/>
</dbReference>
<dbReference type="InterPro" id="IPR000453">
    <property type="entry name" value="Chorismate_synth"/>
</dbReference>
<dbReference type="InterPro" id="IPR035904">
    <property type="entry name" value="Chorismate_synth_AroC_sf"/>
</dbReference>
<dbReference type="InterPro" id="IPR020541">
    <property type="entry name" value="Chorismate_synthase_CS"/>
</dbReference>
<dbReference type="NCBIfam" id="TIGR00033">
    <property type="entry name" value="aroC"/>
    <property type="match status" value="1"/>
</dbReference>
<dbReference type="NCBIfam" id="NF003793">
    <property type="entry name" value="PRK05382.1"/>
    <property type="match status" value="1"/>
</dbReference>
<dbReference type="PANTHER" id="PTHR21085">
    <property type="entry name" value="CHORISMATE SYNTHASE"/>
    <property type="match status" value="1"/>
</dbReference>
<dbReference type="PANTHER" id="PTHR21085:SF0">
    <property type="entry name" value="CHORISMATE SYNTHASE"/>
    <property type="match status" value="1"/>
</dbReference>
<dbReference type="Pfam" id="PF01264">
    <property type="entry name" value="Chorismate_synt"/>
    <property type="match status" value="1"/>
</dbReference>
<dbReference type="PIRSF" id="PIRSF001456">
    <property type="entry name" value="Chorismate_synth"/>
    <property type="match status" value="1"/>
</dbReference>
<dbReference type="SUPFAM" id="SSF103263">
    <property type="entry name" value="Chorismate synthase, AroC"/>
    <property type="match status" value="1"/>
</dbReference>
<dbReference type="PROSITE" id="PS00787">
    <property type="entry name" value="CHORISMATE_SYNTHASE_1"/>
    <property type="match status" value="1"/>
</dbReference>
<dbReference type="PROSITE" id="PS00788">
    <property type="entry name" value="CHORISMATE_SYNTHASE_2"/>
    <property type="match status" value="1"/>
</dbReference>
<dbReference type="PROSITE" id="PS00789">
    <property type="entry name" value="CHORISMATE_SYNTHASE_3"/>
    <property type="match status" value="1"/>
</dbReference>
<protein>
    <recommendedName>
        <fullName evidence="1">Chorismate synthase</fullName>
        <shortName evidence="1">CS</shortName>
        <ecNumber evidence="1">4.2.3.5</ecNumber>
    </recommendedName>
    <alternativeName>
        <fullName evidence="1">5-enolpyruvylshikimate-3-phosphate phospholyase</fullName>
    </alternativeName>
</protein>
<feature type="chain" id="PRO_0000140664" description="Chorismate synthase">
    <location>
        <begin position="1"/>
        <end position="363"/>
    </location>
</feature>
<feature type="binding site" evidence="1">
    <location>
        <position position="47"/>
    </location>
    <ligand>
        <name>NADP(+)</name>
        <dbReference type="ChEBI" id="CHEBI:58349"/>
    </ligand>
</feature>
<feature type="binding site" evidence="1">
    <location>
        <position position="53"/>
    </location>
    <ligand>
        <name>NADP(+)</name>
        <dbReference type="ChEBI" id="CHEBI:58349"/>
    </ligand>
</feature>
<feature type="binding site" evidence="1">
    <location>
        <begin position="124"/>
        <end position="126"/>
    </location>
    <ligand>
        <name>FMN</name>
        <dbReference type="ChEBI" id="CHEBI:58210"/>
    </ligand>
</feature>
<feature type="binding site" evidence="1">
    <location>
        <position position="286"/>
    </location>
    <ligand>
        <name>FMN</name>
        <dbReference type="ChEBI" id="CHEBI:58210"/>
    </ligand>
</feature>
<feature type="binding site" evidence="1">
    <location>
        <begin position="301"/>
        <end position="305"/>
    </location>
    <ligand>
        <name>FMN</name>
        <dbReference type="ChEBI" id="CHEBI:58210"/>
    </ligand>
</feature>
<feature type="binding site" evidence="1">
    <location>
        <position position="327"/>
    </location>
    <ligand>
        <name>FMN</name>
        <dbReference type="ChEBI" id="CHEBI:58210"/>
    </ligand>
</feature>
<gene>
    <name evidence="1" type="primary">aroC</name>
    <name type="ordered locus">tll0463</name>
</gene>
<accession>Q8DLM1</accession>
<organism>
    <name type="scientific">Thermosynechococcus vestitus (strain NIES-2133 / IAM M-273 / BP-1)</name>
    <dbReference type="NCBI Taxonomy" id="197221"/>
    <lineage>
        <taxon>Bacteria</taxon>
        <taxon>Bacillati</taxon>
        <taxon>Cyanobacteriota</taxon>
        <taxon>Cyanophyceae</taxon>
        <taxon>Acaryochloridales</taxon>
        <taxon>Thermosynechococcaceae</taxon>
        <taxon>Thermosynechococcus</taxon>
    </lineage>
</organism>